<keyword id="KW-0167">Capsid protein</keyword>
<keyword id="KW-1139">Helical capsid protein</keyword>
<keyword id="KW-1043">Host membrane</keyword>
<keyword id="KW-0472">Membrane</keyword>
<keyword id="KW-1185">Reference proteome</keyword>
<keyword id="KW-0812">Transmembrane</keyword>
<keyword id="KW-1133">Transmembrane helix</keyword>
<keyword id="KW-0946">Virion</keyword>
<reference key="1">
    <citation type="journal article" date="1994" name="J. Gen. Virol.">
        <title>Nucleotide sequence determination, characterization and purification of the single-stranded DNA-binding protein and major coat protein of filamentous phage phi-Lf of Xanthomonas campestris pv. campestris.</title>
        <authorList>
            <person name="Wen F.-S."/>
            <person name="Tseng Y.-H."/>
        </authorList>
    </citation>
    <scope>NUCLEOTIDE SEQUENCE [GENOMIC DNA]</scope>
</reference>
<sequence length="42" mass="4115">MGDILTGVSGAEAATAMIAAAAIIALVGFTKWGAKKVASFFG</sequence>
<protein>
    <recommendedName>
        <fullName>Capsid protein G8P</fullName>
    </recommendedName>
    <alternativeName>
        <fullName>Coat protein B</fullName>
    </alternativeName>
    <alternativeName>
        <fullName>Gene 8 protein</fullName>
        <shortName>G8P</shortName>
    </alternativeName>
    <alternativeName>
        <fullName>Major coat protein</fullName>
    </alternativeName>
</protein>
<comment type="function">
    <text evidence="1">Self assembles to form a helical capsid wrapping up the viral genomic DNA. The capsid displays a filamentous structure with a length of 760-1950 nm and a width of 6-8 nm. The virion assembly and budding take place at the host inner membrane (By similarity).</text>
</comment>
<comment type="subunit">
    <text evidence="1">Homomultimerizes. There are several thousands of this protein in the phage capsid (By similarity).</text>
</comment>
<comment type="subcellular location">
    <subcellularLocation>
        <location evidence="3">Virion</location>
    </subcellularLocation>
    <subcellularLocation>
        <location>Host membrane</location>
        <topology>Single-pass membrane protein</topology>
    </subcellularLocation>
    <text evidence="1">prior to assembly, the major capsid protein is found associated with the bacterial host inner membrane.</text>
</comment>
<comment type="similarity">
    <text evidence="3">Belongs to the inovirus capsid protein family.</text>
</comment>
<organism>
    <name type="scientific">Xanthomonas phage phiLf</name>
    <name type="common">Bacteriophage phi-Lf</name>
    <dbReference type="NCBI Taxonomy" id="28365"/>
    <lineage>
        <taxon>Viruses</taxon>
        <taxon>Monodnaviria</taxon>
        <taxon>Loebvirae</taxon>
        <taxon>Hofneiviricota</taxon>
        <taxon>Faserviricetes</taxon>
        <taxon>Tubulavirales</taxon>
        <taxon>Inoviridae</taxon>
    </lineage>
</organism>
<feature type="chain" id="PRO_0000098226" description="Capsid protein G8P">
    <location>
        <begin position="1"/>
        <end position="42"/>
    </location>
</feature>
<feature type="topological domain" description="Periplasmic" evidence="2">
    <location>
        <begin position="1"/>
        <end position="12"/>
    </location>
</feature>
<feature type="transmembrane region" description="Helical" evidence="2">
    <location>
        <begin position="13"/>
        <end position="34"/>
    </location>
</feature>
<feature type="topological domain" description="Cytoplasmic" evidence="2">
    <location>
        <begin position="35"/>
        <end position="42"/>
    </location>
</feature>
<organismHost>
    <name type="scientific">Xanthomonas campestris pv. campestris</name>
    <dbReference type="NCBI Taxonomy" id="340"/>
</organismHost>
<dbReference type="EMBL" id="X70331">
    <property type="protein sequence ID" value="CAA49799.1"/>
    <property type="molecule type" value="Genomic_DNA"/>
</dbReference>
<dbReference type="PIR" id="S33485">
    <property type="entry name" value="S33485"/>
</dbReference>
<dbReference type="Proteomes" id="UP000007611">
    <property type="component" value="Genome"/>
</dbReference>
<dbReference type="GO" id="GO:0019029">
    <property type="term" value="C:helical viral capsid"/>
    <property type="evidence" value="ECO:0007669"/>
    <property type="project" value="UniProtKB-KW"/>
</dbReference>
<dbReference type="GO" id="GO:0033644">
    <property type="term" value="C:host cell membrane"/>
    <property type="evidence" value="ECO:0007669"/>
    <property type="project" value="UniProtKB-SubCell"/>
</dbReference>
<dbReference type="GO" id="GO:0016020">
    <property type="term" value="C:membrane"/>
    <property type="evidence" value="ECO:0007669"/>
    <property type="project" value="UniProtKB-KW"/>
</dbReference>
<gene>
    <name type="primary">VIII</name>
</gene>
<name>CAPSD_BPPHL</name>
<proteinExistence type="inferred from homology"/>
<accession>P68674</accession>
<accession>Q07485</accession>
<evidence type="ECO:0000250" key="1"/>
<evidence type="ECO:0000255" key="2"/>
<evidence type="ECO:0000305" key="3"/>